<keyword id="KW-0611">Plant defense</keyword>
<keyword id="KW-0646">Protease inhibitor</keyword>
<keyword id="KW-1185">Reference proteome</keyword>
<keyword id="KW-0677">Repeat</keyword>
<keyword id="KW-0964">Secreted</keyword>
<keyword id="KW-0732">Signal</keyword>
<keyword id="KW-0789">Thiol protease inhibitor</keyword>
<feature type="signal peptide" evidence="2">
    <location>
        <begin position="1"/>
        <end position="32"/>
    </location>
</feature>
<feature type="chain" id="PRO_0000277509" description="Cysteine proteinase inhibitor 12">
    <location>
        <begin position="33"/>
        <end position="250"/>
    </location>
</feature>
<feature type="domain" description="Cystatin 1">
    <location>
        <begin position="49"/>
        <end position="137"/>
    </location>
</feature>
<feature type="domain" description="Cystatin 2">
    <location>
        <begin position="156"/>
        <end position="202"/>
    </location>
</feature>
<feature type="short sequence motif" description="Secondary area of contact" evidence="1">
    <location>
        <begin position="93"/>
        <end position="97"/>
    </location>
</feature>
<feature type="site" description="Reactive site" evidence="1">
    <location>
        <position position="49"/>
    </location>
</feature>
<comment type="function">
    <text evidence="1">Specific inhibitor of cysteine proteinases. Probably involved in the regulation of endogenous processes and in defense against pests and pathogens (By similarity).</text>
</comment>
<comment type="subcellular location">
    <subcellularLocation>
        <location evidence="3">Secreted</location>
    </subcellularLocation>
</comment>
<comment type="similarity">
    <text evidence="3">Belongs to the cystatin family. Phytocystatin subfamily.</text>
</comment>
<comment type="sequence caution" evidence="3">
    <conflict type="erroneous initiation">
        <sequence resource="EMBL-CDS" id="BAD81175"/>
    </conflict>
</comment>
<protein>
    <recommendedName>
        <fullName>Cysteine proteinase inhibitor 12</fullName>
    </recommendedName>
    <alternativeName>
        <fullName>Oryzacystatin XII</fullName>
        <shortName>OC-XII</shortName>
    </alternativeName>
    <alternativeName>
        <fullName>Oryzacystatin-12</fullName>
    </alternativeName>
</protein>
<name>CYT12_ORYSJ</name>
<reference key="1">
    <citation type="journal article" date="2002" name="Nature">
        <title>The genome sequence and structure of rice chromosome 1.</title>
        <authorList>
            <person name="Sasaki T."/>
            <person name="Matsumoto T."/>
            <person name="Yamamoto K."/>
            <person name="Sakata K."/>
            <person name="Baba T."/>
            <person name="Katayose Y."/>
            <person name="Wu J."/>
            <person name="Niimura Y."/>
            <person name="Cheng Z."/>
            <person name="Nagamura Y."/>
            <person name="Antonio B.A."/>
            <person name="Kanamori H."/>
            <person name="Hosokawa S."/>
            <person name="Masukawa M."/>
            <person name="Arikawa K."/>
            <person name="Chiden Y."/>
            <person name="Hayashi M."/>
            <person name="Okamoto M."/>
            <person name="Ando T."/>
            <person name="Aoki H."/>
            <person name="Arita K."/>
            <person name="Hamada M."/>
            <person name="Harada C."/>
            <person name="Hijishita S."/>
            <person name="Honda M."/>
            <person name="Ichikawa Y."/>
            <person name="Idonuma A."/>
            <person name="Iijima M."/>
            <person name="Ikeda M."/>
            <person name="Ikeno M."/>
            <person name="Ito S."/>
            <person name="Ito T."/>
            <person name="Ito Y."/>
            <person name="Ito Y."/>
            <person name="Iwabuchi A."/>
            <person name="Kamiya K."/>
            <person name="Karasawa W."/>
            <person name="Katagiri S."/>
            <person name="Kikuta A."/>
            <person name="Kobayashi N."/>
            <person name="Kono I."/>
            <person name="Machita K."/>
            <person name="Maehara T."/>
            <person name="Mizuno H."/>
            <person name="Mizubayashi T."/>
            <person name="Mukai Y."/>
            <person name="Nagasaki H."/>
            <person name="Nakashima M."/>
            <person name="Nakama Y."/>
            <person name="Nakamichi Y."/>
            <person name="Nakamura M."/>
            <person name="Namiki N."/>
            <person name="Negishi M."/>
            <person name="Ohta I."/>
            <person name="Ono N."/>
            <person name="Saji S."/>
            <person name="Sakai K."/>
            <person name="Shibata M."/>
            <person name="Shimokawa T."/>
            <person name="Shomura A."/>
            <person name="Song J."/>
            <person name="Takazaki Y."/>
            <person name="Terasawa K."/>
            <person name="Tsuji K."/>
            <person name="Waki K."/>
            <person name="Yamagata H."/>
            <person name="Yamane H."/>
            <person name="Yoshiki S."/>
            <person name="Yoshihara R."/>
            <person name="Yukawa K."/>
            <person name="Zhong H."/>
            <person name="Iwama H."/>
            <person name="Endo T."/>
            <person name="Ito H."/>
            <person name="Hahn J.H."/>
            <person name="Kim H.-I."/>
            <person name="Eun M.-Y."/>
            <person name="Yano M."/>
            <person name="Jiang J."/>
            <person name="Gojobori T."/>
        </authorList>
    </citation>
    <scope>NUCLEOTIDE SEQUENCE [LARGE SCALE GENOMIC DNA]</scope>
    <source>
        <strain>cv. Nipponbare</strain>
    </source>
</reference>
<reference key="2">
    <citation type="journal article" date="2005" name="Nature">
        <title>The map-based sequence of the rice genome.</title>
        <authorList>
            <consortium name="International rice genome sequencing project (IRGSP)"/>
        </authorList>
    </citation>
    <scope>NUCLEOTIDE SEQUENCE [LARGE SCALE GENOMIC DNA]</scope>
    <source>
        <strain>cv. Nipponbare</strain>
    </source>
</reference>
<reference key="3">
    <citation type="journal article" date="2008" name="Nucleic Acids Res.">
        <title>The rice annotation project database (RAP-DB): 2008 update.</title>
        <authorList>
            <consortium name="The rice annotation project (RAP)"/>
        </authorList>
    </citation>
    <scope>GENOME REANNOTATION</scope>
    <source>
        <strain>cv. Nipponbare</strain>
    </source>
</reference>
<reference key="4">
    <citation type="journal article" date="2013" name="Rice">
        <title>Improvement of the Oryza sativa Nipponbare reference genome using next generation sequence and optical map data.</title>
        <authorList>
            <person name="Kawahara Y."/>
            <person name="de la Bastide M."/>
            <person name="Hamilton J.P."/>
            <person name="Kanamori H."/>
            <person name="McCombie W.R."/>
            <person name="Ouyang S."/>
            <person name="Schwartz D.C."/>
            <person name="Tanaka T."/>
            <person name="Wu J."/>
            <person name="Zhou S."/>
            <person name="Childs K.L."/>
            <person name="Davidson R.M."/>
            <person name="Lin H."/>
            <person name="Quesada-Ocampo L."/>
            <person name="Vaillancourt B."/>
            <person name="Sakai H."/>
            <person name="Lee S.S."/>
            <person name="Kim J."/>
            <person name="Numa H."/>
            <person name="Itoh T."/>
            <person name="Buell C.R."/>
            <person name="Matsumoto T."/>
        </authorList>
    </citation>
    <scope>GENOME REANNOTATION</scope>
    <source>
        <strain>cv. Nipponbare</strain>
    </source>
</reference>
<reference key="5">
    <citation type="journal article" date="2003" name="Science">
        <title>Collection, mapping, and annotation of over 28,000 cDNA clones from japonica rice.</title>
        <authorList>
            <consortium name="The rice full-length cDNA consortium"/>
        </authorList>
    </citation>
    <scope>NUCLEOTIDE SEQUENCE [LARGE SCALE MRNA]</scope>
    <source>
        <strain>cv. Nipponbare</strain>
    </source>
</reference>
<reference key="6">
    <citation type="journal article" date="2005" name="Mol. Genet. Genomics">
        <title>Comparative phylogenetic analysis of cystatin gene families from arabidopsis, rice and barley.</title>
        <authorList>
            <person name="Martinez M."/>
            <person name="Abraham Z."/>
            <person name="Carbonero P."/>
            <person name="Diaz I."/>
        </authorList>
    </citation>
    <scope>GENE FAMILY</scope>
</reference>
<dbReference type="EMBL" id="AP001073">
    <property type="protein sequence ID" value="BAD81175.1"/>
    <property type="status" value="ALT_INIT"/>
    <property type="molecule type" value="Genomic_DNA"/>
</dbReference>
<dbReference type="EMBL" id="AP008207">
    <property type="protein sequence ID" value="BAF04616.1"/>
    <property type="molecule type" value="Genomic_DNA"/>
</dbReference>
<dbReference type="EMBL" id="AP014957">
    <property type="protein sequence ID" value="BAS71500.1"/>
    <property type="molecule type" value="Genomic_DNA"/>
</dbReference>
<dbReference type="EMBL" id="AK119511">
    <property type="protein sequence ID" value="BAG99665.1"/>
    <property type="molecule type" value="mRNA"/>
</dbReference>
<dbReference type="RefSeq" id="XP_015621945.1">
    <property type="nucleotide sequence ID" value="XM_015766459.1"/>
</dbReference>
<dbReference type="SMR" id="Q0JNR2"/>
<dbReference type="FunCoup" id="Q0JNR2">
    <property type="interactions" value="1330"/>
</dbReference>
<dbReference type="STRING" id="39947.Q0JNR2"/>
<dbReference type="MEROPS" id="I25.014"/>
<dbReference type="PaxDb" id="39947-Q0JNR2"/>
<dbReference type="EnsemblPlants" id="Os01t0270100-01">
    <property type="protein sequence ID" value="Os01t0270100-01"/>
    <property type="gene ID" value="Os01g0270100"/>
</dbReference>
<dbReference type="Gramene" id="Os01t0270100-01">
    <property type="protein sequence ID" value="Os01t0270100-01"/>
    <property type="gene ID" value="Os01g0270100"/>
</dbReference>
<dbReference type="KEGG" id="dosa:Os01g0270100"/>
<dbReference type="eggNOG" id="ENOG502QRXR">
    <property type="taxonomic scope" value="Eukaryota"/>
</dbReference>
<dbReference type="HOGENOM" id="CLU_072701_1_0_1"/>
<dbReference type="InParanoid" id="Q0JNR2"/>
<dbReference type="OMA" id="HNNKENA"/>
<dbReference type="OrthoDB" id="1908104at2759"/>
<dbReference type="Proteomes" id="UP000000763">
    <property type="component" value="Chromosome 1"/>
</dbReference>
<dbReference type="Proteomes" id="UP000059680">
    <property type="component" value="Chromosome 1"/>
</dbReference>
<dbReference type="ExpressionAtlas" id="Q0JNR2">
    <property type="expression patterns" value="baseline and differential"/>
</dbReference>
<dbReference type="GO" id="GO:0005576">
    <property type="term" value="C:extracellular region"/>
    <property type="evidence" value="ECO:0007669"/>
    <property type="project" value="UniProtKB-SubCell"/>
</dbReference>
<dbReference type="GO" id="GO:0004869">
    <property type="term" value="F:cysteine-type endopeptidase inhibitor activity"/>
    <property type="evidence" value="ECO:0000318"/>
    <property type="project" value="GO_Central"/>
</dbReference>
<dbReference type="GO" id="GO:0006952">
    <property type="term" value="P:defense response"/>
    <property type="evidence" value="ECO:0007669"/>
    <property type="project" value="UniProtKB-KW"/>
</dbReference>
<dbReference type="CDD" id="cd00042">
    <property type="entry name" value="CY"/>
    <property type="match status" value="2"/>
</dbReference>
<dbReference type="FunFam" id="3.10.450.10:FF:000011">
    <property type="entry name" value="Cysteine proteinase inhibitor"/>
    <property type="match status" value="1"/>
</dbReference>
<dbReference type="FunFam" id="3.10.450.10:FF:000013">
    <property type="entry name" value="Cysteine proteinase inhibitor"/>
    <property type="match status" value="1"/>
</dbReference>
<dbReference type="Gene3D" id="3.10.450.10">
    <property type="match status" value="2"/>
</dbReference>
<dbReference type="InterPro" id="IPR027214">
    <property type="entry name" value="Cystatin"/>
</dbReference>
<dbReference type="InterPro" id="IPR000010">
    <property type="entry name" value="Cystatin_dom"/>
</dbReference>
<dbReference type="InterPro" id="IPR046350">
    <property type="entry name" value="Cystatin_sf"/>
</dbReference>
<dbReference type="InterPro" id="IPR018073">
    <property type="entry name" value="Prot_inh_cystat_CS"/>
</dbReference>
<dbReference type="PANTHER" id="PTHR11413">
    <property type="entry name" value="CYSTATIN FAMILY MEMBER"/>
    <property type="match status" value="1"/>
</dbReference>
<dbReference type="PANTHER" id="PTHR11413:SF103">
    <property type="entry name" value="CYSTEINE PROTEINASE INHIBITOR 12"/>
    <property type="match status" value="1"/>
</dbReference>
<dbReference type="Pfam" id="PF16845">
    <property type="entry name" value="SQAPI"/>
    <property type="match status" value="1"/>
</dbReference>
<dbReference type="SMART" id="SM00043">
    <property type="entry name" value="CY"/>
    <property type="match status" value="1"/>
</dbReference>
<dbReference type="SUPFAM" id="SSF54403">
    <property type="entry name" value="Cystatin/monellin"/>
    <property type="match status" value="2"/>
</dbReference>
<dbReference type="PROSITE" id="PS00287">
    <property type="entry name" value="CYSTATIN"/>
    <property type="match status" value="1"/>
</dbReference>
<evidence type="ECO:0000250" key="1"/>
<evidence type="ECO:0000255" key="2"/>
<evidence type="ECO:0000305" key="3"/>
<sequence>MRVAATTRPASSSAAAPLPLFLLLAVAAAAAALFLVGSASLAMAGHVLGGAHDAPSAANSVETDALARFAVDEHNKRENALLEFVRVVEAKEQVVAGTLHHLTLEALEAGRKKVYEAKVWVKPWLDFKELQEFRNTGDATTFTNADLGAKKGGHEPGWRDVPVHDPVVKDAADHAVKSIQQRSNSLFPYELLEIVRAKAEVVEDFAKFDILMKLKRGNKEEKFKAEVHKNLEGAFVLNQMQQEHDESSSQ</sequence>
<accession>Q0JNR2</accession>
<accession>B7F4W8</accession>
<accession>Q5NBI1</accession>
<proteinExistence type="evidence at transcript level"/>
<organism>
    <name type="scientific">Oryza sativa subsp. japonica</name>
    <name type="common">Rice</name>
    <dbReference type="NCBI Taxonomy" id="39947"/>
    <lineage>
        <taxon>Eukaryota</taxon>
        <taxon>Viridiplantae</taxon>
        <taxon>Streptophyta</taxon>
        <taxon>Embryophyta</taxon>
        <taxon>Tracheophyta</taxon>
        <taxon>Spermatophyta</taxon>
        <taxon>Magnoliopsida</taxon>
        <taxon>Liliopsida</taxon>
        <taxon>Poales</taxon>
        <taxon>Poaceae</taxon>
        <taxon>BOP clade</taxon>
        <taxon>Oryzoideae</taxon>
        <taxon>Oryzeae</taxon>
        <taxon>Oryzinae</taxon>
        <taxon>Oryza</taxon>
        <taxon>Oryza sativa</taxon>
    </lineage>
</organism>
<gene>
    <name type="ordered locus">Os01g0270100</name>
    <name type="ordered locus">LOC_Os01g16430</name>
    <name type="ORF">P0667A10.20</name>
</gene>